<organism>
    <name type="scientific">Parafrankia sp. (strain EAN1pec)</name>
    <dbReference type="NCBI Taxonomy" id="298653"/>
    <lineage>
        <taxon>Bacteria</taxon>
        <taxon>Bacillati</taxon>
        <taxon>Actinomycetota</taxon>
        <taxon>Actinomycetes</taxon>
        <taxon>Frankiales</taxon>
        <taxon>Frankiaceae</taxon>
        <taxon>Parafrankia</taxon>
    </lineage>
</organism>
<comment type="function">
    <text evidence="1">Catalyzes the conversion of glucosamine-6-phosphate to glucosamine-1-phosphate.</text>
</comment>
<comment type="catalytic activity">
    <reaction evidence="1">
        <text>alpha-D-glucosamine 1-phosphate = D-glucosamine 6-phosphate</text>
        <dbReference type="Rhea" id="RHEA:23424"/>
        <dbReference type="ChEBI" id="CHEBI:58516"/>
        <dbReference type="ChEBI" id="CHEBI:58725"/>
        <dbReference type="EC" id="5.4.2.10"/>
    </reaction>
</comment>
<comment type="cofactor">
    <cofactor evidence="1">
        <name>Mg(2+)</name>
        <dbReference type="ChEBI" id="CHEBI:18420"/>
    </cofactor>
    <text evidence="1">Binds 1 Mg(2+) ion per subunit.</text>
</comment>
<comment type="PTM">
    <text evidence="1">Activated by phosphorylation.</text>
</comment>
<comment type="similarity">
    <text evidence="1">Belongs to the phosphohexose mutase family.</text>
</comment>
<gene>
    <name evidence="1" type="primary">glmM</name>
    <name type="ordered locus">Franean1_6016</name>
</gene>
<sequence length="467" mass="47985">MARLFGTDGVRGVANADLTAELALALASAAVEEVADRGTPPPGPVDGVPVARSAHGIDHRPLVVVGRDTRPSGEFLEAAVVAGLARAGADVTRIGVVPTPAVSYVVAATGADLGVMLSASHNPMPDNGIKLFAAGGLKLPDDVEDAIERRMAGPAARRPVAAAVGRVRDDSMLVDGYVDHLLATLPGGPGGLRGLRVVVDCAQGAASDLAPRVLRAAGADVIALHADGDGLRINDRSGATHLDSLRDAVVAHGADAGIAHDGDADRCLAVDSAGEIVDGDQILALCALALAERGELERGTVVVTVMSNLGFHHAMRDAGIDVVTTPVGDRYVLEAMRSGAYSLGGEQSGHVVFLRHAGTGDGLLTALQILGRMAETSQPLHELAKAMTRLPQVLVNVRGVDRARAETSDELRAAVADAEAELAGAGRVLLRPSGTEPLVRVMVEAPTDELARDVAGRLADVVQRALR</sequence>
<protein>
    <recommendedName>
        <fullName evidence="1">Phosphoglucosamine mutase</fullName>
        <ecNumber evidence="1">5.4.2.10</ecNumber>
    </recommendedName>
</protein>
<name>GLMM_PARS2</name>
<proteinExistence type="inferred from homology"/>
<feature type="chain" id="PRO_1000201102" description="Phosphoglucosamine mutase">
    <location>
        <begin position="1"/>
        <end position="467"/>
    </location>
</feature>
<feature type="active site" description="Phosphoserine intermediate" evidence="1">
    <location>
        <position position="120"/>
    </location>
</feature>
<feature type="binding site" description="via phosphate group" evidence="1">
    <location>
        <position position="120"/>
    </location>
    <ligand>
        <name>Mg(2+)</name>
        <dbReference type="ChEBI" id="CHEBI:18420"/>
    </ligand>
</feature>
<feature type="binding site" evidence="1">
    <location>
        <position position="261"/>
    </location>
    <ligand>
        <name>Mg(2+)</name>
        <dbReference type="ChEBI" id="CHEBI:18420"/>
    </ligand>
</feature>
<feature type="binding site" evidence="1">
    <location>
        <position position="263"/>
    </location>
    <ligand>
        <name>Mg(2+)</name>
        <dbReference type="ChEBI" id="CHEBI:18420"/>
    </ligand>
</feature>
<feature type="binding site" evidence="1">
    <location>
        <position position="265"/>
    </location>
    <ligand>
        <name>Mg(2+)</name>
        <dbReference type="ChEBI" id="CHEBI:18420"/>
    </ligand>
</feature>
<feature type="modified residue" description="Phosphoserine" evidence="1">
    <location>
        <position position="120"/>
    </location>
</feature>
<keyword id="KW-0413">Isomerase</keyword>
<keyword id="KW-0460">Magnesium</keyword>
<keyword id="KW-0479">Metal-binding</keyword>
<keyword id="KW-0597">Phosphoprotein</keyword>
<dbReference type="EC" id="5.4.2.10" evidence="1"/>
<dbReference type="EMBL" id="CP000820">
    <property type="protein sequence ID" value="ABW15360.1"/>
    <property type="molecule type" value="Genomic_DNA"/>
</dbReference>
<dbReference type="RefSeq" id="WP_020463456.1">
    <property type="nucleotide sequence ID" value="NC_009921.1"/>
</dbReference>
<dbReference type="SMR" id="A8LAZ9"/>
<dbReference type="STRING" id="298653.Franean1_6016"/>
<dbReference type="KEGG" id="fre:Franean1_6016"/>
<dbReference type="eggNOG" id="COG1109">
    <property type="taxonomic scope" value="Bacteria"/>
</dbReference>
<dbReference type="HOGENOM" id="CLU_016950_7_0_11"/>
<dbReference type="GO" id="GO:0005829">
    <property type="term" value="C:cytosol"/>
    <property type="evidence" value="ECO:0007669"/>
    <property type="project" value="TreeGrafter"/>
</dbReference>
<dbReference type="GO" id="GO:0000287">
    <property type="term" value="F:magnesium ion binding"/>
    <property type="evidence" value="ECO:0007669"/>
    <property type="project" value="UniProtKB-UniRule"/>
</dbReference>
<dbReference type="GO" id="GO:0008966">
    <property type="term" value="F:phosphoglucosamine mutase activity"/>
    <property type="evidence" value="ECO:0007669"/>
    <property type="project" value="UniProtKB-UniRule"/>
</dbReference>
<dbReference type="GO" id="GO:0004615">
    <property type="term" value="F:phosphomannomutase activity"/>
    <property type="evidence" value="ECO:0007669"/>
    <property type="project" value="TreeGrafter"/>
</dbReference>
<dbReference type="GO" id="GO:0005975">
    <property type="term" value="P:carbohydrate metabolic process"/>
    <property type="evidence" value="ECO:0007669"/>
    <property type="project" value="InterPro"/>
</dbReference>
<dbReference type="GO" id="GO:0009252">
    <property type="term" value="P:peptidoglycan biosynthetic process"/>
    <property type="evidence" value="ECO:0007669"/>
    <property type="project" value="TreeGrafter"/>
</dbReference>
<dbReference type="GO" id="GO:0006048">
    <property type="term" value="P:UDP-N-acetylglucosamine biosynthetic process"/>
    <property type="evidence" value="ECO:0007669"/>
    <property type="project" value="TreeGrafter"/>
</dbReference>
<dbReference type="CDD" id="cd05802">
    <property type="entry name" value="GlmM"/>
    <property type="match status" value="1"/>
</dbReference>
<dbReference type="FunFam" id="3.30.310.50:FF:000001">
    <property type="entry name" value="Phosphoglucosamine mutase"/>
    <property type="match status" value="1"/>
</dbReference>
<dbReference type="FunFam" id="3.40.120.10:FF:000001">
    <property type="entry name" value="Phosphoglucosamine mutase"/>
    <property type="match status" value="1"/>
</dbReference>
<dbReference type="FunFam" id="3.40.120.10:FF:000002">
    <property type="entry name" value="Phosphoglucosamine mutase"/>
    <property type="match status" value="1"/>
</dbReference>
<dbReference type="Gene3D" id="3.40.120.10">
    <property type="entry name" value="Alpha-D-Glucose-1,6-Bisphosphate, subunit A, domain 3"/>
    <property type="match status" value="3"/>
</dbReference>
<dbReference type="Gene3D" id="3.30.310.50">
    <property type="entry name" value="Alpha-D-phosphohexomutase, C-terminal domain"/>
    <property type="match status" value="1"/>
</dbReference>
<dbReference type="HAMAP" id="MF_01554_B">
    <property type="entry name" value="GlmM_B"/>
    <property type="match status" value="1"/>
</dbReference>
<dbReference type="InterPro" id="IPR005844">
    <property type="entry name" value="A-D-PHexomutase_a/b/a-I"/>
</dbReference>
<dbReference type="InterPro" id="IPR016055">
    <property type="entry name" value="A-D-PHexomutase_a/b/a-I/II/III"/>
</dbReference>
<dbReference type="InterPro" id="IPR005845">
    <property type="entry name" value="A-D-PHexomutase_a/b/a-II"/>
</dbReference>
<dbReference type="InterPro" id="IPR005846">
    <property type="entry name" value="A-D-PHexomutase_a/b/a-III"/>
</dbReference>
<dbReference type="InterPro" id="IPR005843">
    <property type="entry name" value="A-D-PHexomutase_C"/>
</dbReference>
<dbReference type="InterPro" id="IPR036900">
    <property type="entry name" value="A-D-PHexomutase_C_sf"/>
</dbReference>
<dbReference type="InterPro" id="IPR016066">
    <property type="entry name" value="A-D-PHexomutase_CS"/>
</dbReference>
<dbReference type="InterPro" id="IPR005841">
    <property type="entry name" value="Alpha-D-phosphohexomutase_SF"/>
</dbReference>
<dbReference type="InterPro" id="IPR006352">
    <property type="entry name" value="GlmM_bact"/>
</dbReference>
<dbReference type="InterPro" id="IPR050060">
    <property type="entry name" value="Phosphoglucosamine_mutase"/>
</dbReference>
<dbReference type="NCBIfam" id="TIGR01455">
    <property type="entry name" value="glmM"/>
    <property type="match status" value="1"/>
</dbReference>
<dbReference type="PANTHER" id="PTHR42946:SF1">
    <property type="entry name" value="PHOSPHOGLUCOMUTASE (ALPHA-D-GLUCOSE-1,6-BISPHOSPHATE-DEPENDENT)"/>
    <property type="match status" value="1"/>
</dbReference>
<dbReference type="PANTHER" id="PTHR42946">
    <property type="entry name" value="PHOSPHOHEXOSE MUTASE"/>
    <property type="match status" value="1"/>
</dbReference>
<dbReference type="Pfam" id="PF02878">
    <property type="entry name" value="PGM_PMM_I"/>
    <property type="match status" value="1"/>
</dbReference>
<dbReference type="Pfam" id="PF02879">
    <property type="entry name" value="PGM_PMM_II"/>
    <property type="match status" value="1"/>
</dbReference>
<dbReference type="Pfam" id="PF02880">
    <property type="entry name" value="PGM_PMM_III"/>
    <property type="match status" value="1"/>
</dbReference>
<dbReference type="Pfam" id="PF00408">
    <property type="entry name" value="PGM_PMM_IV"/>
    <property type="match status" value="1"/>
</dbReference>
<dbReference type="PRINTS" id="PR00509">
    <property type="entry name" value="PGMPMM"/>
</dbReference>
<dbReference type="SUPFAM" id="SSF55957">
    <property type="entry name" value="Phosphoglucomutase, C-terminal domain"/>
    <property type="match status" value="1"/>
</dbReference>
<dbReference type="SUPFAM" id="SSF53738">
    <property type="entry name" value="Phosphoglucomutase, first 3 domains"/>
    <property type="match status" value="3"/>
</dbReference>
<dbReference type="PROSITE" id="PS00710">
    <property type="entry name" value="PGM_PMM"/>
    <property type="match status" value="1"/>
</dbReference>
<reference key="1">
    <citation type="journal article" date="2007" name="Genome Res.">
        <title>Genome characteristics of facultatively symbiotic Frankia sp. strains reflect host range and host plant biogeography.</title>
        <authorList>
            <person name="Normand P."/>
            <person name="Lapierre P."/>
            <person name="Tisa L.S."/>
            <person name="Gogarten J.P."/>
            <person name="Alloisio N."/>
            <person name="Bagnarol E."/>
            <person name="Bassi C.A."/>
            <person name="Berry A.M."/>
            <person name="Bickhart D.M."/>
            <person name="Choisne N."/>
            <person name="Couloux A."/>
            <person name="Cournoyer B."/>
            <person name="Cruveiller S."/>
            <person name="Daubin V."/>
            <person name="Demange N."/>
            <person name="Francino M.P."/>
            <person name="Goltsman E."/>
            <person name="Huang Y."/>
            <person name="Kopp O.R."/>
            <person name="Labarre L."/>
            <person name="Lapidus A."/>
            <person name="Lavire C."/>
            <person name="Marechal J."/>
            <person name="Martinez M."/>
            <person name="Mastronunzio J.E."/>
            <person name="Mullin B.C."/>
            <person name="Niemann J."/>
            <person name="Pujic P."/>
            <person name="Rawnsley T."/>
            <person name="Rouy Z."/>
            <person name="Schenowitz C."/>
            <person name="Sellstedt A."/>
            <person name="Tavares F."/>
            <person name="Tomkins J.P."/>
            <person name="Vallenet D."/>
            <person name="Valverde C."/>
            <person name="Wall L.G."/>
            <person name="Wang Y."/>
            <person name="Medigue C."/>
            <person name="Benson D.R."/>
        </authorList>
    </citation>
    <scope>NUCLEOTIDE SEQUENCE [LARGE SCALE GENOMIC DNA]</scope>
    <source>
        <strain>EAN1pec</strain>
    </source>
</reference>
<evidence type="ECO:0000255" key="1">
    <source>
        <dbReference type="HAMAP-Rule" id="MF_01554"/>
    </source>
</evidence>
<accession>A8LAZ9</accession>